<sequence length="268" mass="31364">MAGELRIMENKSREDINLSPVSKIEIYSFFDPFSSDCFKLSAILSKLRIEYNQYIRIRHILNPSLKVLTKCQAQSTSNFDNIALAYKAAELQGRVRAERFIHLMQNEIIPKRDIITESMICDCIQNAGIDLEVFKDDLQKSKLTESLKIDLHIAREMEIEQAPSLVFFSEDVHEEGLKVEGLYPYHIYTYIINELMGKPIEKNLPPKLETYIQQQQLVTMEELLTIYEWPEKLLNKELKKLAIQQKIEKLKYPDGDFWKSKMPKIKSK</sequence>
<protein>
    <recommendedName>
        <fullName evidence="1">ClpXP adapter protein SpxH</fullName>
    </recommendedName>
</protein>
<keyword id="KW-0963">Cytoplasm</keyword>
<evidence type="ECO:0000255" key="1">
    <source>
        <dbReference type="HAMAP-Rule" id="MF_02245"/>
    </source>
</evidence>
<evidence type="ECO:0000305" key="2"/>
<comment type="function">
    <text evidence="1">Adapter protein required for efficient degradation of Spx by ClpXP under non-stress conditions. Interaction with Spx stabilizes Spx and exposes the C-terminus of Spx for recognition and proteolysis by ClpXP.</text>
</comment>
<comment type="subunit">
    <text evidence="1">Interacts with Spx.</text>
</comment>
<comment type="subcellular location">
    <subcellularLocation>
        <location evidence="1">Cytoplasm</location>
    </subcellularLocation>
</comment>
<comment type="similarity">
    <text evidence="1">Belongs to the SpxH family.</text>
</comment>
<comment type="sequence caution" evidence="2">
    <conflict type="erroneous initiation">
        <sequence resource="EMBL-CDS" id="BAB42101"/>
    </conflict>
</comment>
<organism>
    <name type="scientific">Staphylococcus aureus (strain N315)</name>
    <dbReference type="NCBI Taxonomy" id="158879"/>
    <lineage>
        <taxon>Bacteria</taxon>
        <taxon>Bacillati</taxon>
        <taxon>Bacillota</taxon>
        <taxon>Bacilli</taxon>
        <taxon>Bacillales</taxon>
        <taxon>Staphylococcaceae</taxon>
        <taxon>Staphylococcus</taxon>
    </lineage>
</organism>
<reference key="1">
    <citation type="journal article" date="2001" name="Lancet">
        <title>Whole genome sequencing of meticillin-resistant Staphylococcus aureus.</title>
        <authorList>
            <person name="Kuroda M."/>
            <person name="Ohta T."/>
            <person name="Uchiyama I."/>
            <person name="Baba T."/>
            <person name="Yuzawa H."/>
            <person name="Kobayashi I."/>
            <person name="Cui L."/>
            <person name="Oguchi A."/>
            <person name="Aoki K."/>
            <person name="Nagai Y."/>
            <person name="Lian J.-Q."/>
            <person name="Ito T."/>
            <person name="Kanamori M."/>
            <person name="Matsumaru H."/>
            <person name="Maruyama A."/>
            <person name="Murakami H."/>
            <person name="Hosoyama A."/>
            <person name="Mizutani-Ui Y."/>
            <person name="Takahashi N.K."/>
            <person name="Sawano T."/>
            <person name="Inoue R."/>
            <person name="Kaito C."/>
            <person name="Sekimizu K."/>
            <person name="Hirakawa H."/>
            <person name="Kuhara S."/>
            <person name="Goto S."/>
            <person name="Yabuzaki J."/>
            <person name="Kanehisa M."/>
            <person name="Yamashita A."/>
            <person name="Oshima K."/>
            <person name="Furuya K."/>
            <person name="Yoshino C."/>
            <person name="Shiba T."/>
            <person name="Hattori M."/>
            <person name="Ogasawara N."/>
            <person name="Hayashi H."/>
            <person name="Hiramatsu K."/>
        </authorList>
    </citation>
    <scope>NUCLEOTIDE SEQUENCE [LARGE SCALE GENOMIC DNA]</scope>
    <source>
        <strain>N315</strain>
    </source>
</reference>
<reference key="2">
    <citation type="submission" date="2007-10" db="UniProtKB">
        <title>Shotgun proteomic analysis of total and membrane protein extracts of S. aureus strain N315.</title>
        <authorList>
            <person name="Vaezzadeh A.R."/>
            <person name="Deshusses J."/>
            <person name="Lescuyer P."/>
            <person name="Hochstrasser D.F."/>
        </authorList>
    </citation>
    <scope>IDENTIFICATION BY MASS SPECTROMETRY [LARGE SCALE ANALYSIS]</scope>
    <source>
        <strain>N315</strain>
    </source>
</reference>
<gene>
    <name evidence="1" type="primary">spxH</name>
    <name type="ordered locus">SA0860</name>
</gene>
<dbReference type="EMBL" id="BA000018">
    <property type="protein sequence ID" value="BAB42101.1"/>
    <property type="status" value="ALT_INIT"/>
    <property type="molecule type" value="Genomic_DNA"/>
</dbReference>
<dbReference type="PIR" id="B89868">
    <property type="entry name" value="B89868"/>
</dbReference>
<dbReference type="SMR" id="Q99V89"/>
<dbReference type="EnsemblBacteria" id="BAB42101">
    <property type="protein sequence ID" value="BAB42101"/>
    <property type="gene ID" value="BAB42101"/>
</dbReference>
<dbReference type="KEGG" id="sau:SA0860"/>
<dbReference type="HOGENOM" id="CLU_069785_0_0_9"/>
<dbReference type="GO" id="GO:0005737">
    <property type="term" value="C:cytoplasm"/>
    <property type="evidence" value="ECO:0007669"/>
    <property type="project" value="UniProtKB-SubCell"/>
</dbReference>
<dbReference type="Gene3D" id="3.40.30.10">
    <property type="entry name" value="Glutaredoxin"/>
    <property type="match status" value="1"/>
</dbReference>
<dbReference type="HAMAP" id="MF_02245">
    <property type="entry name" value="Adapter_SpxH"/>
    <property type="match status" value="1"/>
</dbReference>
<dbReference type="InterPro" id="IPR046404">
    <property type="entry name" value="Adapter_SpxH"/>
</dbReference>
<dbReference type="InterPro" id="IPR036249">
    <property type="entry name" value="Thioredoxin-like_sf"/>
</dbReference>
<dbReference type="PANTHER" id="PTHR13887:SF47">
    <property type="entry name" value="CLPXP ADAPTER PROTEIN SPXH"/>
    <property type="match status" value="1"/>
</dbReference>
<dbReference type="PANTHER" id="PTHR13887">
    <property type="entry name" value="GLUTATHIONE S-TRANSFERASE KAPPA"/>
    <property type="match status" value="1"/>
</dbReference>
<dbReference type="Pfam" id="PF13743">
    <property type="entry name" value="Thioredoxin_5"/>
    <property type="match status" value="1"/>
</dbReference>
<dbReference type="SUPFAM" id="SSF52833">
    <property type="entry name" value="Thioredoxin-like"/>
    <property type="match status" value="1"/>
</dbReference>
<feature type="chain" id="PRO_0000278693" description="ClpXP adapter protein SpxH">
    <location>
        <begin position="1"/>
        <end position="268"/>
    </location>
</feature>
<accession>Q99V89</accession>
<name>SPXH_STAAN</name>
<proteinExistence type="evidence at protein level"/>